<evidence type="ECO:0000255" key="1">
    <source>
        <dbReference type="HAMAP-Rule" id="MF_00036"/>
    </source>
</evidence>
<dbReference type="EC" id="6.1.1.7" evidence="1"/>
<dbReference type="EMBL" id="CP000511">
    <property type="protein sequence ID" value="ABM13448.1"/>
    <property type="molecule type" value="Genomic_DNA"/>
</dbReference>
<dbReference type="RefSeq" id="WP_011779857.1">
    <property type="nucleotide sequence ID" value="NZ_JACKSD010000055.1"/>
</dbReference>
<dbReference type="SMR" id="A1T8E8"/>
<dbReference type="STRING" id="350058.Mvan_2640"/>
<dbReference type="KEGG" id="mva:Mvan_2640"/>
<dbReference type="eggNOG" id="COG0013">
    <property type="taxonomic scope" value="Bacteria"/>
</dbReference>
<dbReference type="HOGENOM" id="CLU_004485_1_1_11"/>
<dbReference type="Proteomes" id="UP000009159">
    <property type="component" value="Chromosome"/>
</dbReference>
<dbReference type="GO" id="GO:0005829">
    <property type="term" value="C:cytosol"/>
    <property type="evidence" value="ECO:0007669"/>
    <property type="project" value="TreeGrafter"/>
</dbReference>
<dbReference type="GO" id="GO:0004813">
    <property type="term" value="F:alanine-tRNA ligase activity"/>
    <property type="evidence" value="ECO:0007669"/>
    <property type="project" value="UniProtKB-UniRule"/>
</dbReference>
<dbReference type="GO" id="GO:0002161">
    <property type="term" value="F:aminoacyl-tRNA deacylase activity"/>
    <property type="evidence" value="ECO:0007669"/>
    <property type="project" value="TreeGrafter"/>
</dbReference>
<dbReference type="GO" id="GO:0005524">
    <property type="term" value="F:ATP binding"/>
    <property type="evidence" value="ECO:0007669"/>
    <property type="project" value="UniProtKB-UniRule"/>
</dbReference>
<dbReference type="GO" id="GO:0000049">
    <property type="term" value="F:tRNA binding"/>
    <property type="evidence" value="ECO:0007669"/>
    <property type="project" value="UniProtKB-KW"/>
</dbReference>
<dbReference type="GO" id="GO:0008270">
    <property type="term" value="F:zinc ion binding"/>
    <property type="evidence" value="ECO:0007669"/>
    <property type="project" value="UniProtKB-UniRule"/>
</dbReference>
<dbReference type="GO" id="GO:0006419">
    <property type="term" value="P:alanyl-tRNA aminoacylation"/>
    <property type="evidence" value="ECO:0007669"/>
    <property type="project" value="UniProtKB-UniRule"/>
</dbReference>
<dbReference type="CDD" id="cd00673">
    <property type="entry name" value="AlaRS_core"/>
    <property type="match status" value="1"/>
</dbReference>
<dbReference type="FunFam" id="3.10.310.40:FF:000001">
    <property type="entry name" value="Alanine--tRNA ligase"/>
    <property type="match status" value="1"/>
</dbReference>
<dbReference type="FunFam" id="3.30.54.20:FF:000001">
    <property type="entry name" value="Alanine--tRNA ligase"/>
    <property type="match status" value="1"/>
</dbReference>
<dbReference type="FunFam" id="3.30.930.10:FF:000004">
    <property type="entry name" value="Alanine--tRNA ligase"/>
    <property type="match status" value="1"/>
</dbReference>
<dbReference type="FunFam" id="3.30.980.10:FF:000004">
    <property type="entry name" value="Alanine--tRNA ligase, cytoplasmic"/>
    <property type="match status" value="1"/>
</dbReference>
<dbReference type="Gene3D" id="2.40.30.130">
    <property type="match status" value="1"/>
</dbReference>
<dbReference type="Gene3D" id="3.10.310.40">
    <property type="match status" value="1"/>
</dbReference>
<dbReference type="Gene3D" id="3.30.54.20">
    <property type="match status" value="1"/>
</dbReference>
<dbReference type="Gene3D" id="6.10.250.550">
    <property type="match status" value="1"/>
</dbReference>
<dbReference type="Gene3D" id="3.30.930.10">
    <property type="entry name" value="Bira Bifunctional Protein, Domain 2"/>
    <property type="match status" value="1"/>
</dbReference>
<dbReference type="Gene3D" id="3.30.980.10">
    <property type="entry name" value="Threonyl-trna Synthetase, Chain A, domain 2"/>
    <property type="match status" value="1"/>
</dbReference>
<dbReference type="HAMAP" id="MF_00036_B">
    <property type="entry name" value="Ala_tRNA_synth_B"/>
    <property type="match status" value="1"/>
</dbReference>
<dbReference type="InterPro" id="IPR045864">
    <property type="entry name" value="aa-tRNA-synth_II/BPL/LPL"/>
</dbReference>
<dbReference type="InterPro" id="IPR002318">
    <property type="entry name" value="Ala-tRNA-lgiase_IIc"/>
</dbReference>
<dbReference type="InterPro" id="IPR018162">
    <property type="entry name" value="Ala-tRNA-ligase_IIc_anticod-bd"/>
</dbReference>
<dbReference type="InterPro" id="IPR018165">
    <property type="entry name" value="Ala-tRNA-synth_IIc_core"/>
</dbReference>
<dbReference type="InterPro" id="IPR018164">
    <property type="entry name" value="Ala-tRNA-synth_IIc_N"/>
</dbReference>
<dbReference type="InterPro" id="IPR050058">
    <property type="entry name" value="Ala-tRNA_ligase"/>
</dbReference>
<dbReference type="InterPro" id="IPR023033">
    <property type="entry name" value="Ala_tRNA_ligase_euk/bac"/>
</dbReference>
<dbReference type="InterPro" id="IPR003156">
    <property type="entry name" value="DHHA1_dom"/>
</dbReference>
<dbReference type="InterPro" id="IPR018163">
    <property type="entry name" value="Thr/Ala-tRNA-synth_IIc_edit"/>
</dbReference>
<dbReference type="InterPro" id="IPR009000">
    <property type="entry name" value="Transl_B-barrel_sf"/>
</dbReference>
<dbReference type="InterPro" id="IPR012947">
    <property type="entry name" value="tRNA_SAD"/>
</dbReference>
<dbReference type="NCBIfam" id="TIGR00344">
    <property type="entry name" value="alaS"/>
    <property type="match status" value="1"/>
</dbReference>
<dbReference type="PANTHER" id="PTHR11777:SF9">
    <property type="entry name" value="ALANINE--TRNA LIGASE, CYTOPLASMIC"/>
    <property type="match status" value="1"/>
</dbReference>
<dbReference type="PANTHER" id="PTHR11777">
    <property type="entry name" value="ALANYL-TRNA SYNTHETASE"/>
    <property type="match status" value="1"/>
</dbReference>
<dbReference type="Pfam" id="PF02272">
    <property type="entry name" value="DHHA1"/>
    <property type="match status" value="1"/>
</dbReference>
<dbReference type="Pfam" id="PF01411">
    <property type="entry name" value="tRNA-synt_2c"/>
    <property type="match status" value="1"/>
</dbReference>
<dbReference type="Pfam" id="PF07973">
    <property type="entry name" value="tRNA_SAD"/>
    <property type="match status" value="1"/>
</dbReference>
<dbReference type="PRINTS" id="PR00980">
    <property type="entry name" value="TRNASYNTHALA"/>
</dbReference>
<dbReference type="SMART" id="SM00863">
    <property type="entry name" value="tRNA_SAD"/>
    <property type="match status" value="1"/>
</dbReference>
<dbReference type="SUPFAM" id="SSF55681">
    <property type="entry name" value="Class II aaRS and biotin synthetases"/>
    <property type="match status" value="1"/>
</dbReference>
<dbReference type="SUPFAM" id="SSF101353">
    <property type="entry name" value="Putative anticodon-binding domain of alanyl-tRNA synthetase (AlaRS)"/>
    <property type="match status" value="1"/>
</dbReference>
<dbReference type="SUPFAM" id="SSF55186">
    <property type="entry name" value="ThrRS/AlaRS common domain"/>
    <property type="match status" value="1"/>
</dbReference>
<dbReference type="SUPFAM" id="SSF50447">
    <property type="entry name" value="Translation proteins"/>
    <property type="match status" value="1"/>
</dbReference>
<dbReference type="PROSITE" id="PS50860">
    <property type="entry name" value="AA_TRNA_LIGASE_II_ALA"/>
    <property type="match status" value="1"/>
</dbReference>
<keyword id="KW-0030">Aminoacyl-tRNA synthetase</keyword>
<keyword id="KW-0067">ATP-binding</keyword>
<keyword id="KW-0963">Cytoplasm</keyword>
<keyword id="KW-0436">Ligase</keyword>
<keyword id="KW-0479">Metal-binding</keyword>
<keyword id="KW-0547">Nucleotide-binding</keyword>
<keyword id="KW-0648">Protein biosynthesis</keyword>
<keyword id="KW-0694">RNA-binding</keyword>
<keyword id="KW-0820">tRNA-binding</keyword>
<keyword id="KW-0862">Zinc</keyword>
<comment type="function">
    <text evidence="1">Catalyzes the attachment of alanine to tRNA(Ala) in a two-step reaction: alanine is first activated by ATP to form Ala-AMP and then transferred to the acceptor end of tRNA(Ala). Also edits incorrectly charged Ser-tRNA(Ala) and Gly-tRNA(Ala) via its editing domain.</text>
</comment>
<comment type="catalytic activity">
    <reaction evidence="1">
        <text>tRNA(Ala) + L-alanine + ATP = L-alanyl-tRNA(Ala) + AMP + diphosphate</text>
        <dbReference type="Rhea" id="RHEA:12540"/>
        <dbReference type="Rhea" id="RHEA-COMP:9657"/>
        <dbReference type="Rhea" id="RHEA-COMP:9923"/>
        <dbReference type="ChEBI" id="CHEBI:30616"/>
        <dbReference type="ChEBI" id="CHEBI:33019"/>
        <dbReference type="ChEBI" id="CHEBI:57972"/>
        <dbReference type="ChEBI" id="CHEBI:78442"/>
        <dbReference type="ChEBI" id="CHEBI:78497"/>
        <dbReference type="ChEBI" id="CHEBI:456215"/>
        <dbReference type="EC" id="6.1.1.7"/>
    </reaction>
</comment>
<comment type="cofactor">
    <cofactor evidence="1">
        <name>Zn(2+)</name>
        <dbReference type="ChEBI" id="CHEBI:29105"/>
    </cofactor>
    <text evidence="1">Binds 1 zinc ion per subunit.</text>
</comment>
<comment type="subcellular location">
    <subcellularLocation>
        <location evidence="1">Cytoplasm</location>
    </subcellularLocation>
</comment>
<comment type="domain">
    <text evidence="1">Consists of three domains; the N-terminal catalytic domain, the editing domain and the C-terminal C-Ala domain. The editing domain removes incorrectly charged amino acids, while the C-Ala domain, along with tRNA(Ala), serves as a bridge to cooperatively bring together the editing and aminoacylation centers thus stimulating deacylation of misacylated tRNAs.</text>
</comment>
<comment type="similarity">
    <text evidence="1">Belongs to the class-II aminoacyl-tRNA synthetase family.</text>
</comment>
<protein>
    <recommendedName>
        <fullName evidence="1">Alanine--tRNA ligase</fullName>
        <ecNumber evidence="1">6.1.1.7</ecNumber>
    </recommendedName>
    <alternativeName>
        <fullName evidence="1">Alanyl-tRNA synthetase</fullName>
        <shortName evidence="1">AlaRS</shortName>
    </alternativeName>
</protein>
<organism>
    <name type="scientific">Mycolicibacterium vanbaalenii (strain DSM 7251 / JCM 13017 / BCRC 16820 / KCTC 9966 / NRRL B-24157 / PYR-1)</name>
    <name type="common">Mycobacterium vanbaalenii</name>
    <dbReference type="NCBI Taxonomy" id="350058"/>
    <lineage>
        <taxon>Bacteria</taxon>
        <taxon>Bacillati</taxon>
        <taxon>Actinomycetota</taxon>
        <taxon>Actinomycetes</taxon>
        <taxon>Mycobacteriales</taxon>
        <taxon>Mycobacteriaceae</taxon>
        <taxon>Mycolicibacterium</taxon>
    </lineage>
</organism>
<accession>A1T8E8</accession>
<sequence>MQTHEIRKRFLDHFVKAGHTEVPSASVILDDPNLLFVNAGMVQFVPYFLGQRTPPWDRAASVQKCIRTPDIDEVGITTRHNTFFQMAGNFSFGDYFKKGAIEFAWTLLTNPVEAGGYGFDPERLWATVYLDDDEAIGYWQEVAGLPLERIQRRGMADNYWSMGIPGPCGPSSEIYYDRGPEYGIEGGPEANEDRYIEIWNLVFMQNERGEGTSKEDFEILGPLPRKNIDTGMGVERVACLLQGVDNVYETDLLRPAIDLVAGIAPRGYGQGVHEDDVRYRIIADHSRTAAIIIGDGVSPGNEGRGYVLRRLLRRIIRAAKLLGVDDPIMAELMATVRDAMSPSYPELAADFDRIQRIAVAEETAFNRTLASGSKLFDDAARATKASGAEKLSGRDAFTLHDTYGFPIELTLEMAAEADLSVDEEGFRALMAEQRQRAKADAAARKQAHADLSAYRELVDAGPTEFTGFDELSSEARILGIFVDGKRVPVVAHTGREGAQERVELILDRSPFYAESGGQIADEGTVTGTGASETAKAAVTDVQKIAKTLWAHRINVESGEFVEGDTVVAAVDPRWRHGATQGHSGTHMVHAALRQVLGPNAVQAGSLNRPGYLRFDFNWQGALTDDQRSQIEEVTNQAVEADFEVHSFTTELDKAKAMGAMALFGENYPDEVRVVEIGGPFSLELCGGTHVRSSAQIGPVTILGESSVGSGVRRVEAYVGLDSFRHLAKERALMAGLASSLKVPSEEVPARVATLVEKLRAAEKELDRLRLAGARSAAVNAAAGAEQIGDVRLVAQRMAGGISGADLRSLVGEIRGKLGSDPAVVALIAEGDNDSVPFVVAVNPAAQDRGVRADELVKVMGAAVNGRGGGKADLAQGSGKGAAGIDAALAAIRAEIGRS</sequence>
<reference key="1">
    <citation type="submission" date="2006-12" db="EMBL/GenBank/DDBJ databases">
        <title>Complete sequence of Mycobacterium vanbaalenii PYR-1.</title>
        <authorList>
            <consortium name="US DOE Joint Genome Institute"/>
            <person name="Copeland A."/>
            <person name="Lucas S."/>
            <person name="Lapidus A."/>
            <person name="Barry K."/>
            <person name="Detter J.C."/>
            <person name="Glavina del Rio T."/>
            <person name="Hammon N."/>
            <person name="Israni S."/>
            <person name="Dalin E."/>
            <person name="Tice H."/>
            <person name="Pitluck S."/>
            <person name="Singan V."/>
            <person name="Schmutz J."/>
            <person name="Larimer F."/>
            <person name="Land M."/>
            <person name="Hauser L."/>
            <person name="Kyrpides N."/>
            <person name="Anderson I.J."/>
            <person name="Miller C."/>
            <person name="Richardson P."/>
        </authorList>
    </citation>
    <scope>NUCLEOTIDE SEQUENCE [LARGE SCALE GENOMIC DNA]</scope>
    <source>
        <strain>DSM 7251 / JCM 13017 / BCRC 16820 / KCTC 9966 / NRRL B-24157 / PYR-1</strain>
    </source>
</reference>
<feature type="chain" id="PRO_0000347689" description="Alanine--tRNA ligase">
    <location>
        <begin position="1"/>
        <end position="898"/>
    </location>
</feature>
<feature type="binding site" evidence="1">
    <location>
        <position position="582"/>
    </location>
    <ligand>
        <name>Zn(2+)</name>
        <dbReference type="ChEBI" id="CHEBI:29105"/>
    </ligand>
</feature>
<feature type="binding site" evidence="1">
    <location>
        <position position="586"/>
    </location>
    <ligand>
        <name>Zn(2+)</name>
        <dbReference type="ChEBI" id="CHEBI:29105"/>
    </ligand>
</feature>
<feature type="binding site" evidence="1">
    <location>
        <position position="685"/>
    </location>
    <ligand>
        <name>Zn(2+)</name>
        <dbReference type="ChEBI" id="CHEBI:29105"/>
    </ligand>
</feature>
<feature type="binding site" evidence="1">
    <location>
        <position position="689"/>
    </location>
    <ligand>
        <name>Zn(2+)</name>
        <dbReference type="ChEBI" id="CHEBI:29105"/>
    </ligand>
</feature>
<gene>
    <name evidence="1" type="primary">alaS</name>
    <name type="ordered locus">Mvan_2640</name>
</gene>
<proteinExistence type="inferred from homology"/>
<name>SYA_MYCVP</name>